<proteinExistence type="inferred from homology"/>
<accession>Q9Z9G7</accession>
<accession>Q9JQ43</accession>
<organism>
    <name type="scientific">Chlamydia pneumoniae</name>
    <name type="common">Chlamydophila pneumoniae</name>
    <dbReference type="NCBI Taxonomy" id="83558"/>
    <lineage>
        <taxon>Bacteria</taxon>
        <taxon>Pseudomonadati</taxon>
        <taxon>Chlamydiota</taxon>
        <taxon>Chlamydiia</taxon>
        <taxon>Chlamydiales</taxon>
        <taxon>Chlamydiaceae</taxon>
        <taxon>Chlamydia/Chlamydophila group</taxon>
        <taxon>Chlamydia</taxon>
    </lineage>
</organism>
<evidence type="ECO:0000250" key="1"/>
<evidence type="ECO:0000305" key="2"/>
<sequence length="492" mass="53596">MYRYSALELAKAVTLGELTATGVTQHFFHRIEEAEGQVGAFISLCKEQALEQAELIDKKRSRGEPLGKLAGVPVGIKDNIHVTGLKTTCASRVLENYQPPFDATVVERIKKEDGIILGKLNMDEFAMGSTTLYSAFHPTHNPWDLSRVPGGSSGGSAAAVSARFCPVALGSDTGGSIRQPAAFCGVVGFKPSYGAVSRYGLVAFASSLDQIGPLANTVEDVALMMDVFSGRDPKDATSREFFRDSFMSKLSTEVPKVIGVPRTFLEGLRDDIRENFFSSLAIFEGEGTHLVDVELDILSHAVSIYYILASAEAATNLARFDGVRYGYRSPQAHTISQLYDLSRGEGFGKEVMRRILLGNYVLSAERQNVYYKKATAVRAKIVKAFRTAFEKCEILAMPVCSSPAFEIGEILDPVTLYLQDIYTVAMNLAYLPAIAVPSGFSKEGLPLGLQIIGQQGQDQQVCQVGYSFQEHAQIKQLFSKRYAKSVVLGGQS</sequence>
<comment type="function">
    <text evidence="1">Allows the formation of correctly charged Gln-tRNA(Gln) through the transamidation of misacylated Glu-tRNA(Gln) in organisms which lack glutaminyl-tRNA synthetase. The reaction takes place in the presence of glutamine and ATP through an activated gamma-phospho-Glu-tRNA(Gln) (By similarity).</text>
</comment>
<comment type="catalytic activity">
    <reaction>
        <text>L-glutamyl-tRNA(Gln) + L-glutamine + ATP + H2O = L-glutaminyl-tRNA(Gln) + L-glutamate + ADP + phosphate + H(+)</text>
        <dbReference type="Rhea" id="RHEA:17521"/>
        <dbReference type="Rhea" id="RHEA-COMP:9681"/>
        <dbReference type="Rhea" id="RHEA-COMP:9684"/>
        <dbReference type="ChEBI" id="CHEBI:15377"/>
        <dbReference type="ChEBI" id="CHEBI:15378"/>
        <dbReference type="ChEBI" id="CHEBI:29985"/>
        <dbReference type="ChEBI" id="CHEBI:30616"/>
        <dbReference type="ChEBI" id="CHEBI:43474"/>
        <dbReference type="ChEBI" id="CHEBI:58359"/>
        <dbReference type="ChEBI" id="CHEBI:78520"/>
        <dbReference type="ChEBI" id="CHEBI:78521"/>
        <dbReference type="ChEBI" id="CHEBI:456216"/>
        <dbReference type="EC" id="6.3.5.7"/>
    </reaction>
</comment>
<comment type="subunit">
    <text evidence="1">Heterotrimer of A, B and C subunits.</text>
</comment>
<comment type="similarity">
    <text evidence="2">Belongs to the amidase family. GatA subfamily.</text>
</comment>
<feature type="chain" id="PRO_0000105151" description="Glutamyl-tRNA(Gln) amidotransferase subunit A">
    <location>
        <begin position="1"/>
        <end position="492"/>
    </location>
</feature>
<feature type="active site" description="Charge relay system" evidence="1">
    <location>
        <position position="77"/>
    </location>
</feature>
<feature type="active site" description="Charge relay system" evidence="1">
    <location>
        <position position="152"/>
    </location>
</feature>
<feature type="active site" description="Acyl-ester intermediate" evidence="1">
    <location>
        <position position="176"/>
    </location>
</feature>
<feature type="sequence conflict" description="In Ref. 4; AAP97937." evidence="2" ref="4">
    <original>M</original>
    <variation>V</variation>
    <location>
        <position position="397"/>
    </location>
</feature>
<name>GATA_CHLPN</name>
<gene>
    <name type="primary">gatA</name>
    <name type="ordered locus">CPn_0003</name>
    <name type="ordered locus">CP_0772</name>
    <name type="ordered locus">CpB0004</name>
</gene>
<protein>
    <recommendedName>
        <fullName>Glutamyl-tRNA(Gln) amidotransferase subunit A</fullName>
        <shortName>Glu-ADT subunit A</shortName>
        <ecNumber>6.3.5.7</ecNumber>
    </recommendedName>
</protein>
<dbReference type="EC" id="6.3.5.7"/>
<dbReference type="EMBL" id="AE001363">
    <property type="protein sequence ID" value="AAD18161.1"/>
    <property type="molecule type" value="Genomic_DNA"/>
</dbReference>
<dbReference type="EMBL" id="AE002161">
    <property type="protein sequence ID" value="AAF38572.1"/>
    <property type="molecule type" value="Genomic_DNA"/>
</dbReference>
<dbReference type="EMBL" id="BA000008">
    <property type="protein sequence ID" value="BAA98213.1"/>
    <property type="molecule type" value="Genomic_DNA"/>
</dbReference>
<dbReference type="EMBL" id="AE009440">
    <property type="protein sequence ID" value="AAP97937.1"/>
    <property type="molecule type" value="Genomic_DNA"/>
</dbReference>
<dbReference type="PIR" id="C86491">
    <property type="entry name" value="C86491"/>
</dbReference>
<dbReference type="PIR" id="H72130">
    <property type="entry name" value="H72130"/>
</dbReference>
<dbReference type="RefSeq" id="NP_224216.1">
    <property type="nucleotide sequence ID" value="NC_000922.1"/>
</dbReference>
<dbReference type="RefSeq" id="WP_010882658.1">
    <property type="nucleotide sequence ID" value="NZ_LN847257.1"/>
</dbReference>
<dbReference type="SMR" id="Q9Z9G7"/>
<dbReference type="STRING" id="406984.CPK_ORF00504"/>
<dbReference type="GeneID" id="45050052"/>
<dbReference type="KEGG" id="cpa:CP_0772"/>
<dbReference type="KEGG" id="cpj:gatA"/>
<dbReference type="KEGG" id="cpn:CPn_0003"/>
<dbReference type="KEGG" id="cpt:CpB0004"/>
<dbReference type="PATRIC" id="fig|115713.3.peg.4"/>
<dbReference type="eggNOG" id="COG0154">
    <property type="taxonomic scope" value="Bacteria"/>
</dbReference>
<dbReference type="HOGENOM" id="CLU_009600_0_3_0"/>
<dbReference type="OrthoDB" id="9811471at2"/>
<dbReference type="Proteomes" id="UP000000583">
    <property type="component" value="Chromosome"/>
</dbReference>
<dbReference type="Proteomes" id="UP000000801">
    <property type="component" value="Chromosome"/>
</dbReference>
<dbReference type="GO" id="GO:0030956">
    <property type="term" value="C:glutamyl-tRNA(Gln) amidotransferase complex"/>
    <property type="evidence" value="ECO:0007669"/>
    <property type="project" value="InterPro"/>
</dbReference>
<dbReference type="GO" id="GO:0005524">
    <property type="term" value="F:ATP binding"/>
    <property type="evidence" value="ECO:0007669"/>
    <property type="project" value="UniProtKB-KW"/>
</dbReference>
<dbReference type="GO" id="GO:0050567">
    <property type="term" value="F:glutaminyl-tRNA synthase (glutamine-hydrolyzing) activity"/>
    <property type="evidence" value="ECO:0007669"/>
    <property type="project" value="UniProtKB-UniRule"/>
</dbReference>
<dbReference type="GO" id="GO:0006412">
    <property type="term" value="P:translation"/>
    <property type="evidence" value="ECO:0007669"/>
    <property type="project" value="UniProtKB-UniRule"/>
</dbReference>
<dbReference type="Gene3D" id="3.90.1300.10">
    <property type="entry name" value="Amidase signature (AS) domain"/>
    <property type="match status" value="1"/>
</dbReference>
<dbReference type="HAMAP" id="MF_00120">
    <property type="entry name" value="GatA"/>
    <property type="match status" value="1"/>
</dbReference>
<dbReference type="InterPro" id="IPR000120">
    <property type="entry name" value="Amidase"/>
</dbReference>
<dbReference type="InterPro" id="IPR020556">
    <property type="entry name" value="Amidase_CS"/>
</dbReference>
<dbReference type="InterPro" id="IPR023631">
    <property type="entry name" value="Amidase_dom"/>
</dbReference>
<dbReference type="InterPro" id="IPR036928">
    <property type="entry name" value="AS_sf"/>
</dbReference>
<dbReference type="InterPro" id="IPR004412">
    <property type="entry name" value="GatA"/>
</dbReference>
<dbReference type="NCBIfam" id="TIGR00132">
    <property type="entry name" value="gatA"/>
    <property type="match status" value="1"/>
</dbReference>
<dbReference type="PANTHER" id="PTHR11895:SF151">
    <property type="entry name" value="GLUTAMYL-TRNA(GLN) AMIDOTRANSFERASE SUBUNIT A"/>
    <property type="match status" value="1"/>
</dbReference>
<dbReference type="PANTHER" id="PTHR11895">
    <property type="entry name" value="TRANSAMIDASE"/>
    <property type="match status" value="1"/>
</dbReference>
<dbReference type="Pfam" id="PF01425">
    <property type="entry name" value="Amidase"/>
    <property type="match status" value="1"/>
</dbReference>
<dbReference type="SUPFAM" id="SSF75304">
    <property type="entry name" value="Amidase signature (AS) enzymes"/>
    <property type="match status" value="1"/>
</dbReference>
<dbReference type="PROSITE" id="PS00571">
    <property type="entry name" value="AMIDASES"/>
    <property type="match status" value="1"/>
</dbReference>
<keyword id="KW-0067">ATP-binding</keyword>
<keyword id="KW-0436">Ligase</keyword>
<keyword id="KW-0547">Nucleotide-binding</keyword>
<keyword id="KW-0648">Protein biosynthesis</keyword>
<reference key="1">
    <citation type="journal article" date="1999" name="Nat. Genet.">
        <title>Comparative genomes of Chlamydia pneumoniae and C. trachomatis.</title>
        <authorList>
            <person name="Kalman S."/>
            <person name="Mitchell W.P."/>
            <person name="Marathe R."/>
            <person name="Lammel C.J."/>
            <person name="Fan J."/>
            <person name="Hyman R.W."/>
            <person name="Olinger L."/>
            <person name="Grimwood J."/>
            <person name="Davis R.W."/>
            <person name="Stephens R.S."/>
        </authorList>
    </citation>
    <scope>NUCLEOTIDE SEQUENCE [LARGE SCALE GENOMIC DNA]</scope>
    <source>
        <strain>CWL029</strain>
    </source>
</reference>
<reference key="2">
    <citation type="journal article" date="2000" name="Nucleic Acids Res.">
        <title>Genome sequences of Chlamydia trachomatis MoPn and Chlamydia pneumoniae AR39.</title>
        <authorList>
            <person name="Read T.D."/>
            <person name="Brunham R.C."/>
            <person name="Shen C."/>
            <person name="Gill S.R."/>
            <person name="Heidelberg J.F."/>
            <person name="White O."/>
            <person name="Hickey E.K."/>
            <person name="Peterson J.D."/>
            <person name="Utterback T.R."/>
            <person name="Berry K.J."/>
            <person name="Bass S."/>
            <person name="Linher K.D."/>
            <person name="Weidman J.F."/>
            <person name="Khouri H.M."/>
            <person name="Craven B."/>
            <person name="Bowman C."/>
            <person name="Dodson R.J."/>
            <person name="Gwinn M.L."/>
            <person name="Nelson W.C."/>
            <person name="DeBoy R.T."/>
            <person name="Kolonay J.F."/>
            <person name="McClarty G."/>
            <person name="Salzberg S.L."/>
            <person name="Eisen J.A."/>
            <person name="Fraser C.M."/>
        </authorList>
    </citation>
    <scope>NUCLEOTIDE SEQUENCE [LARGE SCALE GENOMIC DNA]</scope>
    <source>
        <strain>AR39</strain>
    </source>
</reference>
<reference key="3">
    <citation type="journal article" date="2000" name="Nucleic Acids Res.">
        <title>Comparison of whole genome sequences of Chlamydia pneumoniae J138 from Japan and CWL029 from USA.</title>
        <authorList>
            <person name="Shirai M."/>
            <person name="Hirakawa H."/>
            <person name="Kimoto M."/>
            <person name="Tabuchi M."/>
            <person name="Kishi F."/>
            <person name="Ouchi K."/>
            <person name="Shiba T."/>
            <person name="Ishii K."/>
            <person name="Hattori M."/>
            <person name="Kuhara S."/>
            <person name="Nakazawa T."/>
        </authorList>
    </citation>
    <scope>NUCLEOTIDE SEQUENCE [LARGE SCALE GENOMIC DNA]</scope>
    <source>
        <strain>J138</strain>
    </source>
</reference>
<reference key="4">
    <citation type="submission" date="2002-05" db="EMBL/GenBank/DDBJ databases">
        <title>The genome sequence of Chlamydia pneumoniae TW183 and comparison with other Chlamydia strains based on whole genome sequence analysis.</title>
        <authorList>
            <person name="Geng M.M."/>
            <person name="Schuhmacher A."/>
            <person name="Muehldorfer I."/>
            <person name="Bensch K.W."/>
            <person name="Schaefer K.P."/>
            <person name="Schneider S."/>
            <person name="Pohl T."/>
            <person name="Essig A."/>
            <person name="Marre R."/>
            <person name="Melchers K."/>
        </authorList>
    </citation>
    <scope>NUCLEOTIDE SEQUENCE [LARGE SCALE GENOMIC DNA]</scope>
    <source>
        <strain>TW-183</strain>
    </source>
</reference>